<protein>
    <recommendedName>
        <fullName>Putative dihydroorotate dehydrogenase B (NAD(+)), electron transfer subunit</fullName>
    </recommendedName>
    <alternativeName>
        <fullName>Dihydroorotate oxidase B, electron transfer subunit</fullName>
    </alternativeName>
</protein>
<accession>Q9WYG9</accession>
<reference key="1">
    <citation type="journal article" date="1999" name="Nature">
        <title>Evidence for lateral gene transfer between Archaea and Bacteria from genome sequence of Thermotoga maritima.</title>
        <authorList>
            <person name="Nelson K.E."/>
            <person name="Clayton R.A."/>
            <person name="Gill S.R."/>
            <person name="Gwinn M.L."/>
            <person name="Dodson R.J."/>
            <person name="Haft D.H."/>
            <person name="Hickey E.K."/>
            <person name="Peterson J.D."/>
            <person name="Nelson W.C."/>
            <person name="Ketchum K.A."/>
            <person name="McDonald L.A."/>
            <person name="Utterback T.R."/>
            <person name="Malek J.A."/>
            <person name="Linher K.D."/>
            <person name="Garrett M.M."/>
            <person name="Stewart A.M."/>
            <person name="Cotton M.D."/>
            <person name="Pratt M.S."/>
            <person name="Phillips C.A."/>
            <person name="Richardson D.L."/>
            <person name="Heidelberg J.F."/>
            <person name="Sutton G.G."/>
            <person name="Fleischmann R.D."/>
            <person name="Eisen J.A."/>
            <person name="White O."/>
            <person name="Salzberg S.L."/>
            <person name="Smith H.O."/>
            <person name="Venter J.C."/>
            <person name="Fraser C.M."/>
        </authorList>
    </citation>
    <scope>NUCLEOTIDE SEQUENCE [LARGE SCALE GENOMIC DNA]</scope>
    <source>
        <strain>ATCC 43589 / DSM 3109 / JCM 10099 / NBRC 100826 / MSB8</strain>
    </source>
</reference>
<dbReference type="EMBL" id="AE000512">
    <property type="protein sequence ID" value="AAD35421.1"/>
    <property type="molecule type" value="Genomic_DNA"/>
</dbReference>
<dbReference type="PIR" id="H72390">
    <property type="entry name" value="H72390"/>
</dbReference>
<dbReference type="RefSeq" id="NP_228145.1">
    <property type="nucleotide sequence ID" value="NC_000853.1"/>
</dbReference>
<dbReference type="RefSeq" id="WP_010865096.1">
    <property type="nucleotide sequence ID" value="NZ_CP011107.1"/>
</dbReference>
<dbReference type="SMR" id="Q9WYG9"/>
<dbReference type="STRING" id="243274.TM_0334"/>
<dbReference type="PaxDb" id="243274-THEMA_03050"/>
<dbReference type="EnsemblBacteria" id="AAD35421">
    <property type="protein sequence ID" value="AAD35421"/>
    <property type="gene ID" value="TM_0334"/>
</dbReference>
<dbReference type="KEGG" id="tma:TM0334"/>
<dbReference type="KEGG" id="tmi:THEMA_03050"/>
<dbReference type="KEGG" id="tmw:THMA_0342"/>
<dbReference type="PATRIC" id="fig|243274.18.peg.595"/>
<dbReference type="eggNOG" id="COG0543">
    <property type="taxonomic scope" value="Bacteria"/>
</dbReference>
<dbReference type="InParanoid" id="Q9WYG9"/>
<dbReference type="OrthoDB" id="9789468at2"/>
<dbReference type="UniPathway" id="UPA00070">
    <property type="reaction ID" value="UER00945"/>
</dbReference>
<dbReference type="Proteomes" id="UP000008183">
    <property type="component" value="Chromosome"/>
</dbReference>
<dbReference type="GO" id="GO:0051537">
    <property type="term" value="F:2 iron, 2 sulfur cluster binding"/>
    <property type="evidence" value="ECO:0007669"/>
    <property type="project" value="UniProtKB-KW"/>
</dbReference>
<dbReference type="GO" id="GO:0050660">
    <property type="term" value="F:flavin adenine dinucleotide binding"/>
    <property type="evidence" value="ECO:0007669"/>
    <property type="project" value="InterPro"/>
</dbReference>
<dbReference type="GO" id="GO:0046872">
    <property type="term" value="F:metal ion binding"/>
    <property type="evidence" value="ECO:0007669"/>
    <property type="project" value="UniProtKB-KW"/>
</dbReference>
<dbReference type="GO" id="GO:0044205">
    <property type="term" value="P:'de novo' UMP biosynthetic process"/>
    <property type="evidence" value="ECO:0007669"/>
    <property type="project" value="UniProtKB-UniPathway"/>
</dbReference>
<dbReference type="CDD" id="cd06192">
    <property type="entry name" value="DHOD_e_trans_like"/>
    <property type="match status" value="1"/>
</dbReference>
<dbReference type="Gene3D" id="2.10.240.10">
    <property type="entry name" value="Dihydroorotate dehydrogenase, electron transfer subunit"/>
    <property type="match status" value="1"/>
</dbReference>
<dbReference type="Gene3D" id="2.40.30.10">
    <property type="entry name" value="Translation factors"/>
    <property type="match status" value="1"/>
</dbReference>
<dbReference type="InterPro" id="IPR012165">
    <property type="entry name" value="Cyt_c3_hydrogenase_gsu"/>
</dbReference>
<dbReference type="InterPro" id="IPR037117">
    <property type="entry name" value="Dihydroorotate_DH_ele_sf"/>
</dbReference>
<dbReference type="InterPro" id="IPR019480">
    <property type="entry name" value="Dihydroorotate_DH_Fe-S-bd"/>
</dbReference>
<dbReference type="InterPro" id="IPR039261">
    <property type="entry name" value="FNR_nucleotide-bd"/>
</dbReference>
<dbReference type="InterPro" id="IPR050353">
    <property type="entry name" value="PyrK_electron_transfer"/>
</dbReference>
<dbReference type="InterPro" id="IPR017938">
    <property type="entry name" value="Riboflavin_synthase-like_b-brl"/>
</dbReference>
<dbReference type="PANTHER" id="PTHR43513">
    <property type="entry name" value="DIHYDROOROTATE DEHYDROGENASE B (NAD(+)), ELECTRON TRANSFER SUBUNIT"/>
    <property type="match status" value="1"/>
</dbReference>
<dbReference type="PANTHER" id="PTHR43513:SF3">
    <property type="entry name" value="DIHYDROOROTATE DEHYDROGENASE B (NAD(+)), ELECTRON TRANSFER SUBUNIT-RELATED"/>
    <property type="match status" value="1"/>
</dbReference>
<dbReference type="Pfam" id="PF10418">
    <property type="entry name" value="DHODB_Fe-S_bind"/>
    <property type="match status" value="1"/>
</dbReference>
<dbReference type="PIRSF" id="PIRSF006816">
    <property type="entry name" value="Cyc3_hyd_g"/>
    <property type="match status" value="1"/>
</dbReference>
<dbReference type="SUPFAM" id="SSF52343">
    <property type="entry name" value="Ferredoxin reductase-like, C-terminal NADP-linked domain"/>
    <property type="match status" value="1"/>
</dbReference>
<dbReference type="SUPFAM" id="SSF63380">
    <property type="entry name" value="Riboflavin synthase domain-like"/>
    <property type="match status" value="1"/>
</dbReference>
<feature type="chain" id="PRO_0000409560" description="Putative dihydroorotate dehydrogenase B (NAD(+)), electron transfer subunit">
    <location>
        <begin position="1"/>
        <end position="217"/>
    </location>
</feature>
<feature type="binding site" evidence="1">
    <location>
        <begin position="66"/>
        <end position="67"/>
    </location>
    <ligand>
        <name>FAD</name>
        <dbReference type="ChEBI" id="CHEBI:57692"/>
    </ligand>
</feature>
<feature type="binding site" evidence="1">
    <location>
        <position position="183"/>
    </location>
    <ligand>
        <name>[2Fe-2S] cluster</name>
        <dbReference type="ChEBI" id="CHEBI:190135"/>
    </ligand>
</feature>
<feature type="binding site" evidence="1">
    <location>
        <position position="188"/>
    </location>
    <ligand>
        <name>[2Fe-2S] cluster</name>
        <dbReference type="ChEBI" id="CHEBI:190135"/>
    </ligand>
</feature>
<feature type="binding site" evidence="1">
    <location>
        <position position="191"/>
    </location>
    <ligand>
        <name>[2Fe-2S] cluster</name>
        <dbReference type="ChEBI" id="CHEBI:190135"/>
    </ligand>
</feature>
<feature type="binding site" evidence="1">
    <location>
        <position position="203"/>
    </location>
    <ligand>
        <name>[2Fe-2S] cluster</name>
        <dbReference type="ChEBI" id="CHEBI:190135"/>
    </ligand>
</feature>
<gene>
    <name type="primary">pyrK</name>
    <name type="ordered locus">TM_0334</name>
</gene>
<sequence length="217" mass="24474">MERLLLTKKKTIRVNEDTWIVLFEERIDFSPGQFVMLETPKLVRKPFVLGYWEDHTAISVQVKGKGTKWIVEEAEKIKGHGPLGNGFEKPGKGLLIISPTCLTMAEAFRKKMNVDVLVGSRTPFQIPLDHETAVGDEEFLSKLSSTGEYDWYLVSGSRGMEKVCWEHLKGKEVYFSLEEYMGCGIGACKSCAVFTKEGVKHVCTDGPIFRGDELCWS</sequence>
<comment type="function">
    <text evidence="1">Responsible for channeling the electrons from the oxidation of dihydroorotate from the FMN redox center in the PyrD type B subunit to the ultimate electron acceptor NAD(+).</text>
</comment>
<comment type="cofactor">
    <cofactor evidence="1">
        <name>[2Fe-2S] cluster</name>
        <dbReference type="ChEBI" id="CHEBI:190135"/>
    </cofactor>
    <text evidence="1">Binds 1 [2Fe-2S] cluster per subunit.</text>
</comment>
<comment type="cofactor">
    <cofactor evidence="1">
        <name>FAD</name>
        <dbReference type="ChEBI" id="CHEBI:57692"/>
    </cofactor>
    <text evidence="1">Binds 1 FAD per subunit.</text>
</comment>
<comment type="pathway">
    <text>Pyrimidine metabolism; UMP biosynthesis via de novo pathway; orotate from (S)-dihydroorotate (NAD(+) route): step 1/1.</text>
</comment>
<comment type="subunit">
    <text evidence="1">Heterotetramer of 2 PyrK and 2 PyrD type B subunits.</text>
</comment>
<comment type="similarity">
    <text evidence="2">Belongs to the PyrK family.</text>
</comment>
<keyword id="KW-0001">2Fe-2S</keyword>
<keyword id="KW-0249">Electron transport</keyword>
<keyword id="KW-0274">FAD</keyword>
<keyword id="KW-0285">Flavoprotein</keyword>
<keyword id="KW-0408">Iron</keyword>
<keyword id="KW-0411">Iron-sulfur</keyword>
<keyword id="KW-0479">Metal-binding</keyword>
<keyword id="KW-0665">Pyrimidine biosynthesis</keyword>
<keyword id="KW-1185">Reference proteome</keyword>
<keyword id="KW-0813">Transport</keyword>
<organism>
    <name type="scientific">Thermotoga maritima (strain ATCC 43589 / DSM 3109 / JCM 10099 / NBRC 100826 / MSB8)</name>
    <dbReference type="NCBI Taxonomy" id="243274"/>
    <lineage>
        <taxon>Bacteria</taxon>
        <taxon>Thermotogati</taxon>
        <taxon>Thermotogota</taxon>
        <taxon>Thermotogae</taxon>
        <taxon>Thermotogales</taxon>
        <taxon>Thermotogaceae</taxon>
        <taxon>Thermotoga</taxon>
    </lineage>
</organism>
<evidence type="ECO:0000250" key="1"/>
<evidence type="ECO:0000305" key="2"/>
<proteinExistence type="inferred from homology"/>
<name>PYRK_THEMA</name>